<name>AROE_RHORT</name>
<protein>
    <recommendedName>
        <fullName evidence="1">Shikimate dehydrogenase (NADP(+))</fullName>
        <shortName evidence="1">SDH</shortName>
        <ecNumber evidence="1">1.1.1.25</ecNumber>
    </recommendedName>
</protein>
<keyword id="KW-0028">Amino-acid biosynthesis</keyword>
<keyword id="KW-0057">Aromatic amino acid biosynthesis</keyword>
<keyword id="KW-0521">NADP</keyword>
<keyword id="KW-0560">Oxidoreductase</keyword>
<keyword id="KW-1185">Reference proteome</keyword>
<accession>Q2RN88</accession>
<gene>
    <name evidence="1" type="primary">aroE</name>
    <name type="ordered locus">Rru_A3613</name>
</gene>
<feature type="chain" id="PRO_0000325158" description="Shikimate dehydrogenase (NADP(+))">
    <location>
        <begin position="1"/>
        <end position="283"/>
    </location>
</feature>
<feature type="active site" description="Proton acceptor" evidence="1">
    <location>
        <position position="70"/>
    </location>
</feature>
<feature type="binding site" evidence="1">
    <location>
        <begin position="19"/>
        <end position="21"/>
    </location>
    <ligand>
        <name>shikimate</name>
        <dbReference type="ChEBI" id="CHEBI:36208"/>
    </ligand>
</feature>
<feature type="binding site" evidence="1">
    <location>
        <position position="66"/>
    </location>
    <ligand>
        <name>shikimate</name>
        <dbReference type="ChEBI" id="CHEBI:36208"/>
    </ligand>
</feature>
<feature type="binding site" evidence="1">
    <location>
        <position position="82"/>
    </location>
    <ligand>
        <name>NADP(+)</name>
        <dbReference type="ChEBI" id="CHEBI:58349"/>
    </ligand>
</feature>
<feature type="binding site" evidence="1">
    <location>
        <position position="91"/>
    </location>
    <ligand>
        <name>shikimate</name>
        <dbReference type="ChEBI" id="CHEBI:36208"/>
    </ligand>
</feature>
<feature type="binding site" evidence="1">
    <location>
        <position position="107"/>
    </location>
    <ligand>
        <name>shikimate</name>
        <dbReference type="ChEBI" id="CHEBI:36208"/>
    </ligand>
</feature>
<feature type="binding site" evidence="1">
    <location>
        <begin position="133"/>
        <end position="137"/>
    </location>
    <ligand>
        <name>NADP(+)</name>
        <dbReference type="ChEBI" id="CHEBI:58349"/>
    </ligand>
</feature>
<feature type="binding site" evidence="1">
    <location>
        <position position="226"/>
    </location>
    <ligand>
        <name>NADP(+)</name>
        <dbReference type="ChEBI" id="CHEBI:58349"/>
    </ligand>
</feature>
<feature type="binding site" evidence="1">
    <location>
        <position position="228"/>
    </location>
    <ligand>
        <name>shikimate</name>
        <dbReference type="ChEBI" id="CHEBI:36208"/>
    </ligand>
</feature>
<feature type="binding site" evidence="1">
    <location>
        <position position="249"/>
    </location>
    <ligand>
        <name>NADP(+)</name>
        <dbReference type="ChEBI" id="CHEBI:58349"/>
    </ligand>
</feature>
<reference key="1">
    <citation type="journal article" date="2011" name="Stand. Genomic Sci.">
        <title>Complete genome sequence of Rhodospirillum rubrum type strain (S1).</title>
        <authorList>
            <person name="Munk A.C."/>
            <person name="Copeland A."/>
            <person name="Lucas S."/>
            <person name="Lapidus A."/>
            <person name="Del Rio T.G."/>
            <person name="Barry K."/>
            <person name="Detter J.C."/>
            <person name="Hammon N."/>
            <person name="Israni S."/>
            <person name="Pitluck S."/>
            <person name="Brettin T."/>
            <person name="Bruce D."/>
            <person name="Han C."/>
            <person name="Tapia R."/>
            <person name="Gilna P."/>
            <person name="Schmutz J."/>
            <person name="Larimer F."/>
            <person name="Land M."/>
            <person name="Kyrpides N.C."/>
            <person name="Mavromatis K."/>
            <person name="Richardson P."/>
            <person name="Rohde M."/>
            <person name="Goeker M."/>
            <person name="Klenk H.P."/>
            <person name="Zhang Y."/>
            <person name="Roberts G.P."/>
            <person name="Reslewic S."/>
            <person name="Schwartz D.C."/>
        </authorList>
    </citation>
    <scope>NUCLEOTIDE SEQUENCE [LARGE SCALE GENOMIC DNA]</scope>
    <source>
        <strain>ATCC 11170 / ATH 1.1.1 / DSM 467 / LMG 4362 / NCIMB 8255 / S1</strain>
    </source>
</reference>
<dbReference type="EC" id="1.1.1.25" evidence="1"/>
<dbReference type="EMBL" id="CP000230">
    <property type="protein sequence ID" value="ABC24407.1"/>
    <property type="molecule type" value="Genomic_DNA"/>
</dbReference>
<dbReference type="RefSeq" id="WP_011391360.1">
    <property type="nucleotide sequence ID" value="NC_007643.1"/>
</dbReference>
<dbReference type="RefSeq" id="YP_428694.1">
    <property type="nucleotide sequence ID" value="NC_007643.1"/>
</dbReference>
<dbReference type="SMR" id="Q2RN88"/>
<dbReference type="STRING" id="269796.Rru_A3613"/>
<dbReference type="EnsemblBacteria" id="ABC24407">
    <property type="protein sequence ID" value="ABC24407"/>
    <property type="gene ID" value="Rru_A3613"/>
</dbReference>
<dbReference type="KEGG" id="rru:Rru_A3613"/>
<dbReference type="PATRIC" id="fig|269796.9.peg.3734"/>
<dbReference type="eggNOG" id="COG0169">
    <property type="taxonomic scope" value="Bacteria"/>
</dbReference>
<dbReference type="HOGENOM" id="CLU_044063_2_0_5"/>
<dbReference type="PhylomeDB" id="Q2RN88"/>
<dbReference type="UniPathway" id="UPA00053">
    <property type="reaction ID" value="UER00087"/>
</dbReference>
<dbReference type="Proteomes" id="UP000001929">
    <property type="component" value="Chromosome"/>
</dbReference>
<dbReference type="GO" id="GO:0005829">
    <property type="term" value="C:cytosol"/>
    <property type="evidence" value="ECO:0007669"/>
    <property type="project" value="TreeGrafter"/>
</dbReference>
<dbReference type="GO" id="GO:0050661">
    <property type="term" value="F:NADP binding"/>
    <property type="evidence" value="ECO:0007669"/>
    <property type="project" value="InterPro"/>
</dbReference>
<dbReference type="GO" id="GO:0004764">
    <property type="term" value="F:shikimate 3-dehydrogenase (NADP+) activity"/>
    <property type="evidence" value="ECO:0007669"/>
    <property type="project" value="UniProtKB-UniRule"/>
</dbReference>
<dbReference type="GO" id="GO:0008652">
    <property type="term" value="P:amino acid biosynthetic process"/>
    <property type="evidence" value="ECO:0007669"/>
    <property type="project" value="UniProtKB-KW"/>
</dbReference>
<dbReference type="GO" id="GO:0009073">
    <property type="term" value="P:aromatic amino acid family biosynthetic process"/>
    <property type="evidence" value="ECO:0007669"/>
    <property type="project" value="UniProtKB-KW"/>
</dbReference>
<dbReference type="GO" id="GO:0009423">
    <property type="term" value="P:chorismate biosynthetic process"/>
    <property type="evidence" value="ECO:0007669"/>
    <property type="project" value="UniProtKB-UniRule"/>
</dbReference>
<dbReference type="GO" id="GO:0019632">
    <property type="term" value="P:shikimate metabolic process"/>
    <property type="evidence" value="ECO:0007669"/>
    <property type="project" value="InterPro"/>
</dbReference>
<dbReference type="CDD" id="cd01065">
    <property type="entry name" value="NAD_bind_Shikimate_DH"/>
    <property type="match status" value="1"/>
</dbReference>
<dbReference type="Gene3D" id="3.40.50.10860">
    <property type="entry name" value="Leucine Dehydrogenase, chain A, domain 1"/>
    <property type="match status" value="1"/>
</dbReference>
<dbReference type="Gene3D" id="3.40.50.720">
    <property type="entry name" value="NAD(P)-binding Rossmann-like Domain"/>
    <property type="match status" value="1"/>
</dbReference>
<dbReference type="HAMAP" id="MF_00222">
    <property type="entry name" value="Shikimate_DH_AroE"/>
    <property type="match status" value="1"/>
</dbReference>
<dbReference type="InterPro" id="IPR046346">
    <property type="entry name" value="Aminoacid_DH-like_N_sf"/>
</dbReference>
<dbReference type="InterPro" id="IPR036291">
    <property type="entry name" value="NAD(P)-bd_dom_sf"/>
</dbReference>
<dbReference type="InterPro" id="IPR041121">
    <property type="entry name" value="SDH_C"/>
</dbReference>
<dbReference type="InterPro" id="IPR011342">
    <property type="entry name" value="Shikimate_DH"/>
</dbReference>
<dbReference type="InterPro" id="IPR013708">
    <property type="entry name" value="Shikimate_DH-bd_N"/>
</dbReference>
<dbReference type="InterPro" id="IPR022893">
    <property type="entry name" value="Shikimate_DH_fam"/>
</dbReference>
<dbReference type="InterPro" id="IPR006151">
    <property type="entry name" value="Shikm_DH/Glu-tRNA_Rdtase"/>
</dbReference>
<dbReference type="NCBIfam" id="TIGR00507">
    <property type="entry name" value="aroE"/>
    <property type="match status" value="1"/>
</dbReference>
<dbReference type="NCBIfam" id="NF001312">
    <property type="entry name" value="PRK00258.1-4"/>
    <property type="match status" value="1"/>
</dbReference>
<dbReference type="PANTHER" id="PTHR21089:SF1">
    <property type="entry name" value="BIFUNCTIONAL 3-DEHYDROQUINATE DEHYDRATASE_SHIKIMATE DEHYDROGENASE, CHLOROPLASTIC"/>
    <property type="match status" value="1"/>
</dbReference>
<dbReference type="PANTHER" id="PTHR21089">
    <property type="entry name" value="SHIKIMATE DEHYDROGENASE"/>
    <property type="match status" value="1"/>
</dbReference>
<dbReference type="Pfam" id="PF18317">
    <property type="entry name" value="SDH_C"/>
    <property type="match status" value="1"/>
</dbReference>
<dbReference type="Pfam" id="PF01488">
    <property type="entry name" value="Shikimate_DH"/>
    <property type="match status" value="1"/>
</dbReference>
<dbReference type="Pfam" id="PF08501">
    <property type="entry name" value="Shikimate_dh_N"/>
    <property type="match status" value="1"/>
</dbReference>
<dbReference type="SUPFAM" id="SSF53223">
    <property type="entry name" value="Aminoacid dehydrogenase-like, N-terminal domain"/>
    <property type="match status" value="1"/>
</dbReference>
<dbReference type="SUPFAM" id="SSF51735">
    <property type="entry name" value="NAD(P)-binding Rossmann-fold domains"/>
    <property type="match status" value="1"/>
</dbReference>
<organism>
    <name type="scientific">Rhodospirillum rubrum (strain ATCC 11170 / ATH 1.1.1 / DSM 467 / LMG 4362 / NCIMB 8255 / S1)</name>
    <dbReference type="NCBI Taxonomy" id="269796"/>
    <lineage>
        <taxon>Bacteria</taxon>
        <taxon>Pseudomonadati</taxon>
        <taxon>Pseudomonadota</taxon>
        <taxon>Alphaproteobacteria</taxon>
        <taxon>Rhodospirillales</taxon>
        <taxon>Rhodospirillaceae</taxon>
        <taxon>Rhodospirillum</taxon>
    </lineage>
</organism>
<sequence length="283" mass="29455">MITGKARVAGVIGWPVGHSRSPRLHGFWLARHGIDGAYVPLAVAPEALERALAALPALGLAGVNVTVPHKEHALARMDALTERARRIGAVNTIVCQSDGRLLGDNTDGFGFLENLRQRRPDWRAGHGPAVVLGAGGAARAVCASLLEAGCPALTLVNRDQGRARALAEALAAWSPVPITLATWDEAPRTLGGAALLVNTTSLGMVGQPPLDLDLRGLAPSALVTDIVYAPLETPLLARARALGLATVDGLGMLLHQGRPGFEAWFGVAPEVDDALRAAVLGKP</sequence>
<comment type="function">
    <text evidence="1">Involved in the biosynthesis of the chorismate, which leads to the biosynthesis of aromatic amino acids. Catalyzes the reversible NADPH linked reduction of 3-dehydroshikimate (DHSA) to yield shikimate (SA).</text>
</comment>
<comment type="catalytic activity">
    <reaction evidence="1">
        <text>shikimate + NADP(+) = 3-dehydroshikimate + NADPH + H(+)</text>
        <dbReference type="Rhea" id="RHEA:17737"/>
        <dbReference type="ChEBI" id="CHEBI:15378"/>
        <dbReference type="ChEBI" id="CHEBI:16630"/>
        <dbReference type="ChEBI" id="CHEBI:36208"/>
        <dbReference type="ChEBI" id="CHEBI:57783"/>
        <dbReference type="ChEBI" id="CHEBI:58349"/>
        <dbReference type="EC" id="1.1.1.25"/>
    </reaction>
</comment>
<comment type="pathway">
    <text evidence="1">Metabolic intermediate biosynthesis; chorismate biosynthesis; chorismate from D-erythrose 4-phosphate and phosphoenolpyruvate: step 4/7.</text>
</comment>
<comment type="subunit">
    <text evidence="1">Homodimer.</text>
</comment>
<comment type="similarity">
    <text evidence="1">Belongs to the shikimate dehydrogenase family.</text>
</comment>
<evidence type="ECO:0000255" key="1">
    <source>
        <dbReference type="HAMAP-Rule" id="MF_00222"/>
    </source>
</evidence>
<proteinExistence type="inferred from homology"/>